<protein>
    <recommendedName>
        <fullName>Beta-lactamase</fullName>
        <ecNumber>3.5.2.6</ecNumber>
    </recommendedName>
    <alternativeName>
        <fullName>Penicillinase</fullName>
    </alternativeName>
</protein>
<evidence type="ECO:0000250" key="1"/>
<evidence type="ECO:0000255" key="2">
    <source>
        <dbReference type="PROSITE-ProRule" id="PRU00648"/>
    </source>
</evidence>
<evidence type="ECO:0000255" key="3">
    <source>
        <dbReference type="PROSITE-ProRule" id="PRU10101"/>
    </source>
</evidence>
<evidence type="ECO:0000305" key="4"/>
<evidence type="ECO:0000305" key="5">
    <source>
    </source>
</evidence>
<name>BLAC_KITAU</name>
<reference key="1">
    <citation type="submission" date="1988-11" db="EMBL/GenBank/DDBJ databases">
        <authorList>
            <person name="Reynes J.-P."/>
            <person name="Drocourt D."/>
            <person name="Tiraby G."/>
        </authorList>
    </citation>
    <scope>NUCLEOTIDE SEQUENCE [GENOMIC DNA]</scope>
</reference>
<reference key="2">
    <citation type="journal article" date="1991" name="Biochem. J.">
        <title>A standard numbering scheme for the class A beta-lactamases.</title>
        <authorList>
            <person name="Ambler R.P."/>
            <person name="Coulson A.F."/>
            <person name="Frere J.M."/>
            <person name="Ghuysen J.M."/>
            <person name="Joris B."/>
            <person name="Forsman M."/>
            <person name="Levesque R.C."/>
            <person name="Tiraby G."/>
            <person name="Waley S.G."/>
        </authorList>
    </citation>
    <scope>AMINO ACID NUMBERING SCHEME</scope>
</reference>
<gene>
    <name type="primary">bla</name>
</gene>
<accession>P10509</accession>
<organism>
    <name type="scientific">Kitasatospora aureofaciens</name>
    <name type="common">Streptomyces aureofaciens</name>
    <dbReference type="NCBI Taxonomy" id="1894"/>
    <lineage>
        <taxon>Bacteria</taxon>
        <taxon>Bacillati</taxon>
        <taxon>Actinomycetota</taxon>
        <taxon>Actinomycetes</taxon>
        <taxon>Kitasatosporales</taxon>
        <taxon>Streptomycetaceae</taxon>
        <taxon>Kitasatospora</taxon>
    </lineage>
</organism>
<sequence length="311" mass="32486">MRLTQAPPSRRTLMTLGAGATMAALLPAGGAAYASTSTAKAPAAEGISGRLRALEKQYAARLGVFALDTGTGAGRSYRAGERFPMCSVFKALAAAAVLRDVDARREFLTKRIHYTEKFVKDAGYIPVTGKPENIAGGMTGAELCAAAVSESDNGAGNLLLRELDGPTGITRFCRSLGDTTTRLDRWEPALNSAEPDRVTDTTSPGAIGRTFGRLIVGSALRAGDRKRLTGWLVANTTNRPTFRAGLPDDWVLADKTGGGEQYGVANDVGVVQPPGRAPLVLSVLSTKFDPKGPTDNPLVAKAAALVAGELT</sequence>
<proteinExistence type="inferred from homology"/>
<comment type="catalytic activity">
    <reaction evidence="3">
        <text>a beta-lactam + H2O = a substituted beta-amino acid</text>
        <dbReference type="Rhea" id="RHEA:20401"/>
        <dbReference type="ChEBI" id="CHEBI:15377"/>
        <dbReference type="ChEBI" id="CHEBI:35627"/>
        <dbReference type="ChEBI" id="CHEBI:140347"/>
        <dbReference type="EC" id="3.5.2.6"/>
    </reaction>
</comment>
<comment type="PTM">
    <text>Predicted to be exported by the Tat system. The position of the signal peptide cleavage has not been experimentally proven.</text>
</comment>
<comment type="miscellaneous">
    <text evidence="5">The class A beta-lactamase family has a specific amino-acid numbering system, sometimes called Ambler or ABL numbering and often misspelt as Amber. A multiple sequence alignment was used to derive a consensus sequence and then the consensus was numbered taking into account insertions and deletions. This allows use of identical numbers, e.g. for active site residues, despite differences in protein length. UniProt always uses natural numbering of residues, hence there appear to be differences in numbering between this entry and some papers.</text>
</comment>
<comment type="similarity">
    <text evidence="4">Belongs to the class-A beta-lactamase family.</text>
</comment>
<feature type="signal peptide" description="Tat-type signal" evidence="2">
    <location>
        <begin position="1"/>
        <end position="34"/>
    </location>
</feature>
<feature type="chain" id="PRO_0000017013" description="Beta-lactamase">
    <location>
        <begin position="35"/>
        <end position="311"/>
    </location>
</feature>
<feature type="active site" description="Acyl-ester intermediate" evidence="3">
    <location>
        <position position="87"/>
    </location>
</feature>
<feature type="binding site" evidence="1">
    <location>
        <begin position="255"/>
        <end position="257"/>
    </location>
    <ligand>
        <name>substrate</name>
    </ligand>
</feature>
<keyword id="KW-0046">Antibiotic resistance</keyword>
<keyword id="KW-0378">Hydrolase</keyword>
<keyword id="KW-0732">Signal</keyword>
<dbReference type="EC" id="3.5.2.6"/>
<dbReference type="EMBL" id="X13597">
    <property type="protein sequence ID" value="CAA31933.1"/>
    <property type="molecule type" value="Genomic_DNA"/>
</dbReference>
<dbReference type="PIR" id="S02714">
    <property type="entry name" value="S02714"/>
</dbReference>
<dbReference type="SMR" id="P10509"/>
<dbReference type="GO" id="GO:0008800">
    <property type="term" value="F:beta-lactamase activity"/>
    <property type="evidence" value="ECO:0007669"/>
    <property type="project" value="UniProtKB-EC"/>
</dbReference>
<dbReference type="GO" id="GO:0030655">
    <property type="term" value="P:beta-lactam antibiotic catabolic process"/>
    <property type="evidence" value="ECO:0007669"/>
    <property type="project" value="InterPro"/>
</dbReference>
<dbReference type="GO" id="GO:0046677">
    <property type="term" value="P:response to antibiotic"/>
    <property type="evidence" value="ECO:0007669"/>
    <property type="project" value="UniProtKB-KW"/>
</dbReference>
<dbReference type="Gene3D" id="3.40.710.10">
    <property type="entry name" value="DD-peptidase/beta-lactamase superfamily"/>
    <property type="match status" value="1"/>
</dbReference>
<dbReference type="InterPro" id="IPR012338">
    <property type="entry name" value="Beta-lactam/transpept-like"/>
</dbReference>
<dbReference type="InterPro" id="IPR045155">
    <property type="entry name" value="Beta-lactam_cat"/>
</dbReference>
<dbReference type="InterPro" id="IPR000871">
    <property type="entry name" value="Beta-lactam_class-A"/>
</dbReference>
<dbReference type="InterPro" id="IPR023650">
    <property type="entry name" value="Beta-lactam_class-A_AS"/>
</dbReference>
<dbReference type="InterPro" id="IPR006311">
    <property type="entry name" value="TAT_signal"/>
</dbReference>
<dbReference type="NCBIfam" id="NF033103">
    <property type="entry name" value="bla_class_A"/>
    <property type="match status" value="1"/>
</dbReference>
<dbReference type="PANTHER" id="PTHR35333">
    <property type="entry name" value="BETA-LACTAMASE"/>
    <property type="match status" value="1"/>
</dbReference>
<dbReference type="PANTHER" id="PTHR35333:SF3">
    <property type="entry name" value="BETA-LACTAMASE-TYPE TRANSPEPTIDASE FOLD CONTAINING PROTEIN"/>
    <property type="match status" value="1"/>
</dbReference>
<dbReference type="Pfam" id="PF13354">
    <property type="entry name" value="Beta-lactamase2"/>
    <property type="match status" value="1"/>
</dbReference>
<dbReference type="PRINTS" id="PR00118">
    <property type="entry name" value="BLACTAMASEA"/>
</dbReference>
<dbReference type="SUPFAM" id="SSF56601">
    <property type="entry name" value="beta-lactamase/transpeptidase-like"/>
    <property type="match status" value="1"/>
</dbReference>
<dbReference type="PROSITE" id="PS00146">
    <property type="entry name" value="BETA_LACTAMASE_A"/>
    <property type="match status" value="1"/>
</dbReference>
<dbReference type="PROSITE" id="PS51318">
    <property type="entry name" value="TAT"/>
    <property type="match status" value="1"/>
</dbReference>